<comment type="function">
    <text evidence="1">Represses ulaG and the ulaABCDEF operon.</text>
</comment>
<comment type="subcellular location">
    <subcellularLocation>
        <location evidence="1">Cytoplasm</location>
    </subcellularLocation>
</comment>
<accession>B1LQL1</accession>
<evidence type="ECO:0000255" key="1">
    <source>
        <dbReference type="HAMAP-Rule" id="MF_01563"/>
    </source>
</evidence>
<feature type="chain" id="PRO_1000147166" description="HTH-type transcriptional regulator UlaR">
    <location>
        <begin position="1"/>
        <end position="251"/>
    </location>
</feature>
<feature type="domain" description="HTH deoR-type" evidence="1">
    <location>
        <begin position="3"/>
        <end position="58"/>
    </location>
</feature>
<feature type="DNA-binding region" description="H-T-H motif" evidence="1">
    <location>
        <begin position="20"/>
        <end position="39"/>
    </location>
</feature>
<keyword id="KW-0963">Cytoplasm</keyword>
<keyword id="KW-0238">DNA-binding</keyword>
<keyword id="KW-0678">Repressor</keyword>
<keyword id="KW-0804">Transcription</keyword>
<keyword id="KW-0805">Transcription regulation</keyword>
<reference key="1">
    <citation type="journal article" date="2008" name="J. Bacteriol.">
        <title>Insights into the environmental resistance gene pool from the genome sequence of the multidrug-resistant environmental isolate Escherichia coli SMS-3-5.</title>
        <authorList>
            <person name="Fricke W.F."/>
            <person name="Wright M.S."/>
            <person name="Lindell A.H."/>
            <person name="Harkins D.M."/>
            <person name="Baker-Austin C."/>
            <person name="Ravel J."/>
            <person name="Stepanauskas R."/>
        </authorList>
    </citation>
    <scope>NUCLEOTIDE SEQUENCE [LARGE SCALE GENOMIC DNA]</scope>
    <source>
        <strain>SMS-3-5 / SECEC</strain>
    </source>
</reference>
<name>ULAR_ECOSM</name>
<protein>
    <recommendedName>
        <fullName evidence="1">HTH-type transcriptional regulator UlaR</fullName>
    </recommendedName>
</protein>
<proteinExistence type="inferred from homology"/>
<organism>
    <name type="scientific">Escherichia coli (strain SMS-3-5 / SECEC)</name>
    <dbReference type="NCBI Taxonomy" id="439855"/>
    <lineage>
        <taxon>Bacteria</taxon>
        <taxon>Pseudomonadati</taxon>
        <taxon>Pseudomonadota</taxon>
        <taxon>Gammaproteobacteria</taxon>
        <taxon>Enterobacterales</taxon>
        <taxon>Enterobacteriaceae</taxon>
        <taxon>Escherichia</taxon>
    </lineage>
</organism>
<sequence length="251" mass="27606">MTEAQRHQILLEMLAQLGFVTVEKVVERLGISPATARRDINKLDESGKLKKVRNGAEAITQQRPRWTPMNLHQAQNHDEKVRIAKAASQLVNTGESVVINCGSTAFLLGREMCGKPVQIITNYLPLANYLIDQEHDSVIIMGGQYNKSQSITLSPQGSENSLYAGHWMFTSGKGLTAEGLYKTDMLTAMAEQKMLSVVGKLVVLVDSSKIGERAGMLFSRADQIDMLITGKNANPEILQQLEAQGVSILRV</sequence>
<gene>
    <name evidence="1" type="primary">ulaR</name>
    <name type="ordered locus">EcSMS35_4661</name>
</gene>
<dbReference type="EMBL" id="CP000970">
    <property type="protein sequence ID" value="ACB16849.1"/>
    <property type="molecule type" value="Genomic_DNA"/>
</dbReference>
<dbReference type="RefSeq" id="WP_000133639.1">
    <property type="nucleotide sequence ID" value="NC_010498.1"/>
</dbReference>
<dbReference type="SMR" id="B1LQL1"/>
<dbReference type="KEGG" id="ecm:EcSMS35_4661"/>
<dbReference type="HOGENOM" id="CLU_060699_3_2_6"/>
<dbReference type="Proteomes" id="UP000007011">
    <property type="component" value="Chromosome"/>
</dbReference>
<dbReference type="GO" id="GO:0005737">
    <property type="term" value="C:cytoplasm"/>
    <property type="evidence" value="ECO:0007669"/>
    <property type="project" value="UniProtKB-SubCell"/>
</dbReference>
<dbReference type="GO" id="GO:0003677">
    <property type="term" value="F:DNA binding"/>
    <property type="evidence" value="ECO:0007669"/>
    <property type="project" value="UniProtKB-KW"/>
</dbReference>
<dbReference type="GO" id="GO:0003700">
    <property type="term" value="F:DNA-binding transcription factor activity"/>
    <property type="evidence" value="ECO:0007669"/>
    <property type="project" value="InterPro"/>
</dbReference>
<dbReference type="GO" id="GO:0045892">
    <property type="term" value="P:negative regulation of DNA-templated transcription"/>
    <property type="evidence" value="ECO:0007669"/>
    <property type="project" value="UniProtKB-UniRule"/>
</dbReference>
<dbReference type="FunFam" id="1.10.10.10:FF:000160">
    <property type="entry name" value="HTH-type transcriptional regulator UlaR"/>
    <property type="match status" value="1"/>
</dbReference>
<dbReference type="Gene3D" id="1.10.10.10">
    <property type="entry name" value="Winged helix-like DNA-binding domain superfamily/Winged helix DNA-binding domain"/>
    <property type="match status" value="1"/>
</dbReference>
<dbReference type="HAMAP" id="MF_01563">
    <property type="entry name" value="HTH_type_UlaR"/>
    <property type="match status" value="1"/>
</dbReference>
<dbReference type="InterPro" id="IPR050313">
    <property type="entry name" value="Carb_Metab_HTH_regulators"/>
</dbReference>
<dbReference type="InterPro" id="IPR014036">
    <property type="entry name" value="DeoR-like_C"/>
</dbReference>
<dbReference type="InterPro" id="IPR001034">
    <property type="entry name" value="DeoR_HTH"/>
</dbReference>
<dbReference type="InterPro" id="IPR037171">
    <property type="entry name" value="NagB/RpiA_transferase-like"/>
</dbReference>
<dbReference type="InterPro" id="IPR018356">
    <property type="entry name" value="Tscrpt_reg_HTH_DeoR_CS"/>
</dbReference>
<dbReference type="InterPro" id="IPR023711">
    <property type="entry name" value="Tscrpt_reg_HTH_UlaR"/>
</dbReference>
<dbReference type="InterPro" id="IPR036388">
    <property type="entry name" value="WH-like_DNA-bd_sf"/>
</dbReference>
<dbReference type="InterPro" id="IPR036390">
    <property type="entry name" value="WH_DNA-bd_sf"/>
</dbReference>
<dbReference type="NCBIfam" id="NF010034">
    <property type="entry name" value="PRK13509.1"/>
    <property type="match status" value="1"/>
</dbReference>
<dbReference type="PANTHER" id="PTHR30363">
    <property type="entry name" value="HTH-TYPE TRANSCRIPTIONAL REGULATOR SRLR-RELATED"/>
    <property type="match status" value="1"/>
</dbReference>
<dbReference type="PANTHER" id="PTHR30363:SF55">
    <property type="entry name" value="HTH-TYPE TRANSCRIPTIONAL REGULATOR ULAR"/>
    <property type="match status" value="1"/>
</dbReference>
<dbReference type="Pfam" id="PF00455">
    <property type="entry name" value="DeoRC"/>
    <property type="match status" value="1"/>
</dbReference>
<dbReference type="Pfam" id="PF08220">
    <property type="entry name" value="HTH_DeoR"/>
    <property type="match status" value="1"/>
</dbReference>
<dbReference type="PRINTS" id="PR00037">
    <property type="entry name" value="HTHLACR"/>
</dbReference>
<dbReference type="SMART" id="SM01134">
    <property type="entry name" value="DeoRC"/>
    <property type="match status" value="1"/>
</dbReference>
<dbReference type="SMART" id="SM00420">
    <property type="entry name" value="HTH_DEOR"/>
    <property type="match status" value="1"/>
</dbReference>
<dbReference type="SUPFAM" id="SSF100950">
    <property type="entry name" value="NagB/RpiA/CoA transferase-like"/>
    <property type="match status" value="1"/>
</dbReference>
<dbReference type="SUPFAM" id="SSF46785">
    <property type="entry name" value="Winged helix' DNA-binding domain"/>
    <property type="match status" value="1"/>
</dbReference>
<dbReference type="PROSITE" id="PS00894">
    <property type="entry name" value="HTH_DEOR_1"/>
    <property type="match status" value="1"/>
</dbReference>
<dbReference type="PROSITE" id="PS51000">
    <property type="entry name" value="HTH_DEOR_2"/>
    <property type="match status" value="1"/>
</dbReference>